<organism>
    <name type="scientific">Treponema denticola (strain ATCC 35405 / DSM 14222 / CIP 103919 / JCM 8153 / KCTC 15104)</name>
    <dbReference type="NCBI Taxonomy" id="243275"/>
    <lineage>
        <taxon>Bacteria</taxon>
        <taxon>Pseudomonadati</taxon>
        <taxon>Spirochaetota</taxon>
        <taxon>Spirochaetia</taxon>
        <taxon>Spirochaetales</taxon>
        <taxon>Treponemataceae</taxon>
        <taxon>Treponema</taxon>
    </lineage>
</organism>
<dbReference type="EC" id="2.1.1.148" evidence="1"/>
<dbReference type="EMBL" id="AE017226">
    <property type="protein sequence ID" value="AAS10806.1"/>
    <property type="molecule type" value="Genomic_DNA"/>
</dbReference>
<dbReference type="RefSeq" id="NP_970925.1">
    <property type="nucleotide sequence ID" value="NC_002967.9"/>
</dbReference>
<dbReference type="SMR" id="Q73QY2"/>
<dbReference type="STRING" id="243275.TDE_0311"/>
<dbReference type="PaxDb" id="243275-TDE_0311"/>
<dbReference type="KEGG" id="tde:TDE_0311"/>
<dbReference type="PATRIC" id="fig|243275.7.peg.300"/>
<dbReference type="eggNOG" id="COG1351">
    <property type="taxonomic scope" value="Bacteria"/>
</dbReference>
<dbReference type="HOGENOM" id="CLU_067790_0_0_12"/>
<dbReference type="OrthoDB" id="9774464at2"/>
<dbReference type="UniPathway" id="UPA00575"/>
<dbReference type="Proteomes" id="UP000008212">
    <property type="component" value="Chromosome"/>
</dbReference>
<dbReference type="GO" id="GO:0050660">
    <property type="term" value="F:flavin adenine dinucleotide binding"/>
    <property type="evidence" value="ECO:0007669"/>
    <property type="project" value="InterPro"/>
</dbReference>
<dbReference type="GO" id="GO:0070402">
    <property type="term" value="F:NADPH binding"/>
    <property type="evidence" value="ECO:0007669"/>
    <property type="project" value="TreeGrafter"/>
</dbReference>
<dbReference type="GO" id="GO:0050797">
    <property type="term" value="F:thymidylate synthase (FAD) activity"/>
    <property type="evidence" value="ECO:0007669"/>
    <property type="project" value="UniProtKB-UniRule"/>
</dbReference>
<dbReference type="GO" id="GO:0004799">
    <property type="term" value="F:thymidylate synthase activity"/>
    <property type="evidence" value="ECO:0007669"/>
    <property type="project" value="TreeGrafter"/>
</dbReference>
<dbReference type="GO" id="GO:0006231">
    <property type="term" value="P:dTMP biosynthetic process"/>
    <property type="evidence" value="ECO:0007669"/>
    <property type="project" value="UniProtKB-UniRule"/>
</dbReference>
<dbReference type="GO" id="GO:0006235">
    <property type="term" value="P:dTTP biosynthetic process"/>
    <property type="evidence" value="ECO:0007669"/>
    <property type="project" value="UniProtKB-UniRule"/>
</dbReference>
<dbReference type="GO" id="GO:0032259">
    <property type="term" value="P:methylation"/>
    <property type="evidence" value="ECO:0007669"/>
    <property type="project" value="UniProtKB-KW"/>
</dbReference>
<dbReference type="CDD" id="cd20175">
    <property type="entry name" value="ThyX"/>
    <property type="match status" value="1"/>
</dbReference>
<dbReference type="Gene3D" id="3.30.1360.170">
    <property type="match status" value="1"/>
</dbReference>
<dbReference type="HAMAP" id="MF_01408">
    <property type="entry name" value="ThyX"/>
    <property type="match status" value="1"/>
</dbReference>
<dbReference type="InterPro" id="IPR003669">
    <property type="entry name" value="Thymidylate_synthase_ThyX"/>
</dbReference>
<dbReference type="InterPro" id="IPR036098">
    <property type="entry name" value="Thymidylate_synthase_ThyX_sf"/>
</dbReference>
<dbReference type="NCBIfam" id="TIGR02170">
    <property type="entry name" value="thyX"/>
    <property type="match status" value="1"/>
</dbReference>
<dbReference type="PANTHER" id="PTHR34934">
    <property type="entry name" value="FLAVIN-DEPENDENT THYMIDYLATE SYNTHASE"/>
    <property type="match status" value="1"/>
</dbReference>
<dbReference type="PANTHER" id="PTHR34934:SF1">
    <property type="entry name" value="FLAVIN-DEPENDENT THYMIDYLATE SYNTHASE"/>
    <property type="match status" value="1"/>
</dbReference>
<dbReference type="Pfam" id="PF02511">
    <property type="entry name" value="Thy1"/>
    <property type="match status" value="1"/>
</dbReference>
<dbReference type="SUPFAM" id="SSF69796">
    <property type="entry name" value="Thymidylate synthase-complementing protein Thy1"/>
    <property type="match status" value="1"/>
</dbReference>
<dbReference type="PROSITE" id="PS51331">
    <property type="entry name" value="THYX"/>
    <property type="match status" value="1"/>
</dbReference>
<accession>Q73QY2</accession>
<evidence type="ECO:0000255" key="1">
    <source>
        <dbReference type="HAMAP-Rule" id="MF_01408"/>
    </source>
</evidence>
<evidence type="ECO:0000255" key="2">
    <source>
        <dbReference type="PROSITE-ProRule" id="PRU00661"/>
    </source>
</evidence>
<name>THYX_TREDE</name>
<comment type="function">
    <text evidence="1">Catalyzes the reductive methylation of 2'-deoxyuridine-5'-monophosphate (dUMP) to 2'-deoxythymidine-5'-monophosphate (dTMP) while utilizing 5,10-methylenetetrahydrofolate (mTHF) as the methyl donor, and NADPH and FADH(2) as the reductant.</text>
</comment>
<comment type="catalytic activity">
    <reaction evidence="1">
        <text>dUMP + (6R)-5,10-methylene-5,6,7,8-tetrahydrofolate + NADPH + H(+) = dTMP + (6S)-5,6,7,8-tetrahydrofolate + NADP(+)</text>
        <dbReference type="Rhea" id="RHEA:29043"/>
        <dbReference type="ChEBI" id="CHEBI:15378"/>
        <dbReference type="ChEBI" id="CHEBI:15636"/>
        <dbReference type="ChEBI" id="CHEBI:57453"/>
        <dbReference type="ChEBI" id="CHEBI:57783"/>
        <dbReference type="ChEBI" id="CHEBI:58349"/>
        <dbReference type="ChEBI" id="CHEBI:63528"/>
        <dbReference type="ChEBI" id="CHEBI:246422"/>
        <dbReference type="EC" id="2.1.1.148"/>
    </reaction>
</comment>
<comment type="cofactor">
    <cofactor evidence="1">
        <name>FAD</name>
        <dbReference type="ChEBI" id="CHEBI:57692"/>
    </cofactor>
    <text evidence="1">Binds 4 FAD per tetramer. Each FAD binding site is formed by three monomers.</text>
</comment>
<comment type="pathway">
    <text evidence="1">Pyrimidine metabolism; dTTP biosynthesis.</text>
</comment>
<comment type="subunit">
    <text evidence="1">Homotetramer.</text>
</comment>
<comment type="similarity">
    <text evidence="1">Belongs to the thymidylate synthase ThyX family.</text>
</comment>
<sequence length="266" mass="30847">MDKEFKVLDKGFIRLVDYMGTDARIVQSARVSYGEGTKTVREDAALIDYLLRNKHTSPFEQVVFTFHVKLPIFVARQWIRHRTARLNEISGRYSILKAEFYVPAGKDIALQSSDNKQGRMNEAVPQDLQNEVITSLQKQQEEIYAGYSKLLDKNIARELARINLPLSTYTEWYWQIDLHNLFHFLRLRMDAHAQKEIRDYAEVMFEICKTVTPLACASFERHEKNGVNFSAEELEAIRNLIAGKDSGLKGKELERFNEKLKSGRQV</sequence>
<protein>
    <recommendedName>
        <fullName evidence="1">Flavin-dependent thymidylate synthase</fullName>
        <shortName evidence="1">FDTS</shortName>
        <ecNumber evidence="1">2.1.1.148</ecNumber>
    </recommendedName>
    <alternativeName>
        <fullName evidence="1">FAD-dependent thymidylate synthase</fullName>
    </alternativeName>
    <alternativeName>
        <fullName evidence="1">Thymidylate synthase ThyX</fullName>
        <shortName evidence="1">TS</shortName>
        <shortName evidence="1">TSase</shortName>
    </alternativeName>
</protein>
<keyword id="KW-0274">FAD</keyword>
<keyword id="KW-0285">Flavoprotein</keyword>
<keyword id="KW-0489">Methyltransferase</keyword>
<keyword id="KW-0521">NADP</keyword>
<keyword id="KW-0545">Nucleotide biosynthesis</keyword>
<keyword id="KW-1185">Reference proteome</keyword>
<keyword id="KW-0808">Transferase</keyword>
<reference key="1">
    <citation type="journal article" date="2004" name="Proc. Natl. Acad. Sci. U.S.A.">
        <title>Comparison of the genome of the oral pathogen Treponema denticola with other spirochete genomes.</title>
        <authorList>
            <person name="Seshadri R."/>
            <person name="Myers G.S.A."/>
            <person name="Tettelin H."/>
            <person name="Eisen J.A."/>
            <person name="Heidelberg J.F."/>
            <person name="Dodson R.J."/>
            <person name="Davidsen T.M."/>
            <person name="DeBoy R.T."/>
            <person name="Fouts D.E."/>
            <person name="Haft D.H."/>
            <person name="Selengut J."/>
            <person name="Ren Q."/>
            <person name="Brinkac L.M."/>
            <person name="Madupu R."/>
            <person name="Kolonay J.F."/>
            <person name="Durkin S.A."/>
            <person name="Daugherty S.C."/>
            <person name="Shetty J."/>
            <person name="Shvartsbeyn A."/>
            <person name="Gebregeorgis E."/>
            <person name="Geer K."/>
            <person name="Tsegaye G."/>
            <person name="Malek J.A."/>
            <person name="Ayodeji B."/>
            <person name="Shatsman S."/>
            <person name="McLeod M.P."/>
            <person name="Smajs D."/>
            <person name="Howell J.K."/>
            <person name="Pal S."/>
            <person name="Amin A."/>
            <person name="Vashisth P."/>
            <person name="McNeill T.Z."/>
            <person name="Xiang Q."/>
            <person name="Sodergren E."/>
            <person name="Baca E."/>
            <person name="Weinstock G.M."/>
            <person name="Norris S.J."/>
            <person name="Fraser C.M."/>
            <person name="Paulsen I.T."/>
        </authorList>
    </citation>
    <scope>NUCLEOTIDE SEQUENCE [LARGE SCALE GENOMIC DNA]</scope>
    <source>
        <strain>ATCC 35405 / DSM 14222 / CIP 103919 / JCM 8153 / KCTC 15104</strain>
    </source>
</reference>
<feature type="chain" id="PRO_0000175582" description="Flavin-dependent thymidylate synthase">
    <location>
        <begin position="1"/>
        <end position="266"/>
    </location>
</feature>
<feature type="domain" description="ThyX" evidence="2">
    <location>
        <begin position="11"/>
        <end position="222"/>
    </location>
</feature>
<feature type="short sequence motif" description="ThyX motif" evidence="1">
    <location>
        <begin position="80"/>
        <end position="90"/>
    </location>
</feature>
<feature type="active site" description="Involved in ionization of N3 of dUMP, leading to its activation" evidence="1">
    <location>
        <position position="188"/>
    </location>
</feature>
<feature type="binding site" evidence="1">
    <location>
        <position position="57"/>
    </location>
    <ligand>
        <name>FAD</name>
        <dbReference type="ChEBI" id="CHEBI:57692"/>
        <note>ligand shared between neighboring subunits</note>
    </ligand>
</feature>
<feature type="binding site" evidence="1">
    <location>
        <begin position="77"/>
        <end position="80"/>
    </location>
    <ligand>
        <name>dUMP</name>
        <dbReference type="ChEBI" id="CHEBI:246422"/>
        <note>ligand shared between dimeric partners</note>
    </ligand>
</feature>
<feature type="binding site" evidence="1">
    <location>
        <begin position="80"/>
        <end position="82"/>
    </location>
    <ligand>
        <name>FAD</name>
        <dbReference type="ChEBI" id="CHEBI:57692"/>
        <note>ligand shared between neighboring subunits</note>
    </ligand>
</feature>
<feature type="binding site" description="in other chain" evidence="1">
    <location>
        <begin position="88"/>
        <end position="92"/>
    </location>
    <ligand>
        <name>dUMP</name>
        <dbReference type="ChEBI" id="CHEBI:246422"/>
        <note>ligand shared between dimeric partners</note>
    </ligand>
</feature>
<feature type="binding site" evidence="1">
    <location>
        <position position="88"/>
    </location>
    <ligand>
        <name>FAD</name>
        <dbReference type="ChEBI" id="CHEBI:57692"/>
        <note>ligand shared between neighboring subunits</note>
    </ligand>
</feature>
<feature type="binding site" description="in other chain" evidence="1">
    <location>
        <position position="161"/>
    </location>
    <ligand>
        <name>dUMP</name>
        <dbReference type="ChEBI" id="CHEBI:246422"/>
        <note>ligand shared between dimeric partners</note>
    </ligand>
</feature>
<feature type="binding site" evidence="1">
    <location>
        <begin position="177"/>
        <end position="179"/>
    </location>
    <ligand>
        <name>FAD</name>
        <dbReference type="ChEBI" id="CHEBI:57692"/>
        <note>ligand shared between neighboring subunits</note>
    </ligand>
</feature>
<feature type="binding site" evidence="1">
    <location>
        <position position="183"/>
    </location>
    <ligand>
        <name>FAD</name>
        <dbReference type="ChEBI" id="CHEBI:57692"/>
        <note>ligand shared between neighboring subunits</note>
    </ligand>
</feature>
<feature type="binding site" evidence="1">
    <location>
        <position position="188"/>
    </location>
    <ligand>
        <name>dUMP</name>
        <dbReference type="ChEBI" id="CHEBI:246422"/>
        <note>ligand shared between dimeric partners</note>
    </ligand>
</feature>
<proteinExistence type="inferred from homology"/>
<gene>
    <name evidence="1" type="primary">thyX</name>
    <name type="ordered locus">TDE_0311</name>
</gene>